<protein>
    <recommendedName>
        <fullName>Interleukin-27 subunit alpha</fullName>
        <shortName>IL-27 subunit alpha</shortName>
        <shortName>IL-27-A</shortName>
        <shortName>IL27-A</shortName>
    </recommendedName>
    <alternativeName>
        <fullName>p28</fullName>
    </alternativeName>
</protein>
<reference key="1">
    <citation type="journal article" date="2002" name="Immunity">
        <title>IL-27, a heterodimeric cytokine composed of EBI3 and p28 protein, induces proliferation of naive CD4(+) T cells.</title>
        <authorList>
            <person name="Pflanz S."/>
            <person name="Timans J.C."/>
            <person name="Cheung J."/>
            <person name="Rosales R."/>
            <person name="Kanzler H."/>
            <person name="Gilbert J."/>
            <person name="Hibbert L."/>
            <person name="Churakova T."/>
            <person name="Travis M."/>
            <person name="Vaisberg E."/>
            <person name="Blumenschein W.M."/>
            <person name="Mattson J.D."/>
            <person name="Wagner J.L."/>
            <person name="To W."/>
            <person name="Zurawski S."/>
            <person name="McClanahan T.K."/>
            <person name="Gorman D.M."/>
            <person name="Bazan J.F."/>
            <person name="de Waal Malefyt R."/>
            <person name="Rennick D."/>
            <person name="Kastelein R.A."/>
        </authorList>
    </citation>
    <scope>NUCLEOTIDE SEQUENCE [MRNA]</scope>
    <scope>FUNCTION</scope>
    <scope>SUBCELLULAR LOCATION</scope>
    <scope>TISSUE SPECIFICITY</scope>
    <scope>SUBUNIT</scope>
    <source>
        <strain>NZB</strain>
    </source>
</reference>
<reference key="2">
    <citation type="journal article" date="2005" name="Science">
        <title>The transcriptional landscape of the mammalian genome.</title>
        <authorList>
            <person name="Carninci P."/>
            <person name="Kasukawa T."/>
            <person name="Katayama S."/>
            <person name="Gough J."/>
            <person name="Frith M.C."/>
            <person name="Maeda N."/>
            <person name="Oyama R."/>
            <person name="Ravasi T."/>
            <person name="Lenhard B."/>
            <person name="Wells C."/>
            <person name="Kodzius R."/>
            <person name="Shimokawa K."/>
            <person name="Bajic V.B."/>
            <person name="Brenner S.E."/>
            <person name="Batalov S."/>
            <person name="Forrest A.R."/>
            <person name="Zavolan M."/>
            <person name="Davis M.J."/>
            <person name="Wilming L.G."/>
            <person name="Aidinis V."/>
            <person name="Allen J.E."/>
            <person name="Ambesi-Impiombato A."/>
            <person name="Apweiler R."/>
            <person name="Aturaliya R.N."/>
            <person name="Bailey T.L."/>
            <person name="Bansal M."/>
            <person name="Baxter L."/>
            <person name="Beisel K.W."/>
            <person name="Bersano T."/>
            <person name="Bono H."/>
            <person name="Chalk A.M."/>
            <person name="Chiu K.P."/>
            <person name="Choudhary V."/>
            <person name="Christoffels A."/>
            <person name="Clutterbuck D.R."/>
            <person name="Crowe M.L."/>
            <person name="Dalla E."/>
            <person name="Dalrymple B.P."/>
            <person name="de Bono B."/>
            <person name="Della Gatta G."/>
            <person name="di Bernardo D."/>
            <person name="Down T."/>
            <person name="Engstrom P."/>
            <person name="Fagiolini M."/>
            <person name="Faulkner G."/>
            <person name="Fletcher C.F."/>
            <person name="Fukushima T."/>
            <person name="Furuno M."/>
            <person name="Futaki S."/>
            <person name="Gariboldi M."/>
            <person name="Georgii-Hemming P."/>
            <person name="Gingeras T.R."/>
            <person name="Gojobori T."/>
            <person name="Green R.E."/>
            <person name="Gustincich S."/>
            <person name="Harbers M."/>
            <person name="Hayashi Y."/>
            <person name="Hensch T.K."/>
            <person name="Hirokawa N."/>
            <person name="Hill D."/>
            <person name="Huminiecki L."/>
            <person name="Iacono M."/>
            <person name="Ikeo K."/>
            <person name="Iwama A."/>
            <person name="Ishikawa T."/>
            <person name="Jakt M."/>
            <person name="Kanapin A."/>
            <person name="Katoh M."/>
            <person name="Kawasawa Y."/>
            <person name="Kelso J."/>
            <person name="Kitamura H."/>
            <person name="Kitano H."/>
            <person name="Kollias G."/>
            <person name="Krishnan S.P."/>
            <person name="Kruger A."/>
            <person name="Kummerfeld S.K."/>
            <person name="Kurochkin I.V."/>
            <person name="Lareau L.F."/>
            <person name="Lazarevic D."/>
            <person name="Lipovich L."/>
            <person name="Liu J."/>
            <person name="Liuni S."/>
            <person name="McWilliam S."/>
            <person name="Madan Babu M."/>
            <person name="Madera M."/>
            <person name="Marchionni L."/>
            <person name="Matsuda H."/>
            <person name="Matsuzawa S."/>
            <person name="Miki H."/>
            <person name="Mignone F."/>
            <person name="Miyake S."/>
            <person name="Morris K."/>
            <person name="Mottagui-Tabar S."/>
            <person name="Mulder N."/>
            <person name="Nakano N."/>
            <person name="Nakauchi H."/>
            <person name="Ng P."/>
            <person name="Nilsson R."/>
            <person name="Nishiguchi S."/>
            <person name="Nishikawa S."/>
            <person name="Nori F."/>
            <person name="Ohara O."/>
            <person name="Okazaki Y."/>
            <person name="Orlando V."/>
            <person name="Pang K.C."/>
            <person name="Pavan W.J."/>
            <person name="Pavesi G."/>
            <person name="Pesole G."/>
            <person name="Petrovsky N."/>
            <person name="Piazza S."/>
            <person name="Reed J."/>
            <person name="Reid J.F."/>
            <person name="Ring B.Z."/>
            <person name="Ringwald M."/>
            <person name="Rost B."/>
            <person name="Ruan Y."/>
            <person name="Salzberg S.L."/>
            <person name="Sandelin A."/>
            <person name="Schneider C."/>
            <person name="Schoenbach C."/>
            <person name="Sekiguchi K."/>
            <person name="Semple C.A."/>
            <person name="Seno S."/>
            <person name="Sessa L."/>
            <person name="Sheng Y."/>
            <person name="Shibata Y."/>
            <person name="Shimada H."/>
            <person name="Shimada K."/>
            <person name="Silva D."/>
            <person name="Sinclair B."/>
            <person name="Sperling S."/>
            <person name="Stupka E."/>
            <person name="Sugiura K."/>
            <person name="Sultana R."/>
            <person name="Takenaka Y."/>
            <person name="Taki K."/>
            <person name="Tammoja K."/>
            <person name="Tan S.L."/>
            <person name="Tang S."/>
            <person name="Taylor M.S."/>
            <person name="Tegner J."/>
            <person name="Teichmann S.A."/>
            <person name="Ueda H.R."/>
            <person name="van Nimwegen E."/>
            <person name="Verardo R."/>
            <person name="Wei C.L."/>
            <person name="Yagi K."/>
            <person name="Yamanishi H."/>
            <person name="Zabarovsky E."/>
            <person name="Zhu S."/>
            <person name="Zimmer A."/>
            <person name="Hide W."/>
            <person name="Bult C."/>
            <person name="Grimmond S.M."/>
            <person name="Teasdale R.D."/>
            <person name="Liu E.T."/>
            <person name="Brusic V."/>
            <person name="Quackenbush J."/>
            <person name="Wahlestedt C."/>
            <person name="Mattick J.S."/>
            <person name="Hume D.A."/>
            <person name="Kai C."/>
            <person name="Sasaki D."/>
            <person name="Tomaru Y."/>
            <person name="Fukuda S."/>
            <person name="Kanamori-Katayama M."/>
            <person name="Suzuki M."/>
            <person name="Aoki J."/>
            <person name="Arakawa T."/>
            <person name="Iida J."/>
            <person name="Imamura K."/>
            <person name="Itoh M."/>
            <person name="Kato T."/>
            <person name="Kawaji H."/>
            <person name="Kawagashira N."/>
            <person name="Kawashima T."/>
            <person name="Kojima M."/>
            <person name="Kondo S."/>
            <person name="Konno H."/>
            <person name="Nakano K."/>
            <person name="Ninomiya N."/>
            <person name="Nishio T."/>
            <person name="Okada M."/>
            <person name="Plessy C."/>
            <person name="Shibata K."/>
            <person name="Shiraki T."/>
            <person name="Suzuki S."/>
            <person name="Tagami M."/>
            <person name="Waki K."/>
            <person name="Watahiki A."/>
            <person name="Okamura-Oho Y."/>
            <person name="Suzuki H."/>
            <person name="Kawai J."/>
            <person name="Hayashizaki Y."/>
        </authorList>
    </citation>
    <scope>NUCLEOTIDE SEQUENCE [LARGE SCALE MRNA]</scope>
    <source>
        <strain>C57BL/6J</strain>
        <tissue>Bone marrow</tissue>
    </source>
</reference>
<reference key="3">
    <citation type="journal article" date="2004" name="Genome Res.">
        <title>The status, quality, and expansion of the NIH full-length cDNA project: the Mammalian Gene Collection (MGC).</title>
        <authorList>
            <consortium name="The MGC Project Team"/>
        </authorList>
    </citation>
    <scope>NUCLEOTIDE SEQUENCE [LARGE SCALE MRNA]</scope>
    <source>
        <tissue>Brain</tissue>
    </source>
</reference>
<reference key="4">
    <citation type="journal article" date="2003" name="J. Interferon Cytokine Res.">
        <title>IL-27 and IFN-alpha signal via Stat1 and Stat3 and induce T-Bet and IL-12Rbeta2 in naive T cells.</title>
        <authorList>
            <person name="Hibbert L."/>
            <person name="Pflanz S."/>
            <person name="De Waal Malefyt R."/>
            <person name="Kastelein R.A."/>
        </authorList>
    </citation>
    <scope>FUNCTION</scope>
</reference>
<reference key="5">
    <citation type="journal article" date="2003" name="Proc. Natl. Acad. Sci. U.S.A.">
        <title>IL-27 regulates IL-12 responsiveness of naive CD4+ T cells through Stat1-dependent and -independent mechanisms.</title>
        <authorList>
            <person name="Lucas S."/>
            <person name="Ghilardi N."/>
            <person name="Li J."/>
            <person name="de Sauvage F.J."/>
        </authorList>
    </citation>
    <scope>FUNCTION</scope>
</reference>
<reference key="6">
    <citation type="journal article" date="2004" name="Cancer Res.">
        <title>Potent antitumor activity of interleukin-27.</title>
        <authorList>
            <person name="Hisada M."/>
            <person name="Kamiya S."/>
            <person name="Fujita K."/>
            <person name="Belladonna M.L."/>
            <person name="Aoki T."/>
            <person name="Koyanagi Y."/>
            <person name="Mizuguchi J."/>
            <person name="Yoshimoto T."/>
        </authorList>
    </citation>
    <scope>FUNCTION</scope>
</reference>
<reference key="7">
    <citation type="journal article" date="2004" name="J. Immunol.">
        <title>IL-27 mediates complete regression of orthotopic primary and metastatic murine neuroblastoma tumors: role for CD8+ T cells.</title>
        <authorList>
            <person name="Salcedo R."/>
            <person name="Stauffer J.K."/>
            <person name="Lincoln E."/>
            <person name="Back T.C."/>
            <person name="Hixon J.A."/>
            <person name="Hahn C."/>
            <person name="Shafer-Weaver K."/>
            <person name="Malyguine A."/>
            <person name="Kastelein R."/>
            <person name="Wigginton J.M."/>
        </authorList>
    </citation>
    <scope>FUNCTION</scope>
</reference>
<reference key="8">
    <citation type="journal article" date="2005" name="Brain Res.">
        <title>Production of IL-27 and other IL-12 family cytokines by microglia and their subpopulations.</title>
        <authorList>
            <person name="Sonobe Y."/>
            <person name="Yawata I."/>
            <person name="Kawanokuchi J."/>
            <person name="Takeuchi H."/>
            <person name="Mizuno T."/>
            <person name="Suzumura A."/>
        </authorList>
    </citation>
    <scope>INDUCTION</scope>
</reference>
<reference key="9">
    <citation type="journal article" date="2005" name="Int. J. Cancer">
        <title>Expression of IL-27 in murine carcinoma cells produces antitumor effects and induces protective immunity in inoculated host animals.</title>
        <authorList>
            <person name="Chiyo M."/>
            <person name="Shimozato O."/>
            <person name="Yu L."/>
            <person name="Kawamura K."/>
            <person name="Iizasa T."/>
            <person name="Fujisawa T."/>
            <person name="Tagawa M."/>
        </authorList>
    </citation>
    <scope>FUNCTION</scope>
</reference>
<reference key="10">
    <citation type="journal article" date="2005" name="J. Immunol.">
        <title>Augmentation of effector CD8+ T cell generation with enhanced granzyme B expression by IL-27.</title>
        <authorList>
            <person name="Morishima N."/>
            <person name="Owaki T."/>
            <person name="Asakawa M."/>
            <person name="Kamiya S."/>
            <person name="Mizuguchi J."/>
            <person name="Yoshimoto T."/>
        </authorList>
    </citation>
    <scope>FUNCTION</scope>
</reference>
<reference key="11">
    <citation type="journal article" date="2006" name="J. Immunol.">
        <title>IL-27 limits IL-2 production during Th1 differentiation.</title>
        <authorList>
            <person name="Villarino A.V."/>
            <person name="Stumhofer J.S."/>
            <person name="Saris C.J.M."/>
            <person name="Kastelein R.A."/>
            <person name="de Sauvage F.J."/>
            <person name="Hunter C.A."/>
        </authorList>
    </citation>
    <scope>FUNCTION</scope>
</reference>
<reference key="12">
    <citation type="journal article" date="2006" name="J. Immunol.">
        <title>IL-27 suppresses CD28-mediated IL-2 production through suppressor of cytokine signaling 3.</title>
        <authorList>
            <person name="Owaki T."/>
            <person name="Asakawa M."/>
            <person name="Kamiya S."/>
            <person name="Takeda K."/>
            <person name="Fukai F."/>
            <person name="Mizuguchi J."/>
            <person name="Yoshimoto T."/>
        </authorList>
    </citation>
    <scope>FUNCTION</scope>
</reference>
<reference key="13">
    <citation type="journal article" date="2006" name="J. Immunol.">
        <title>Antiangiogenic and antitumor activities of IL-27.</title>
        <authorList>
            <person name="Shimizu M."/>
            <person name="Shimamura M."/>
            <person name="Owaki T."/>
            <person name="Asakawa M."/>
            <person name="Fujita K."/>
            <person name="Kudo M."/>
            <person name="Iwakura Y."/>
            <person name="Takeda Y."/>
            <person name="Luster A.D."/>
            <person name="Mizuguchi J."/>
            <person name="Yoshimoto T."/>
        </authorList>
    </citation>
    <scope>FUNCTION</scope>
</reference>
<reference key="14">
    <citation type="journal article" date="2006" name="J. Immunol.">
        <title>Two-sided roles of IL-27: induction of Th1 differentiation on naive CD4+ T cells versus suppression of proinflammatory cytokine production including IL-23-induced IL-17 on activated CD4+ T cells partially through STAT3-dependent mechanism.</title>
        <authorList>
            <person name="Yoshimura T."/>
            <person name="Takeda A."/>
            <person name="Hamano S."/>
            <person name="Miyazaki Y."/>
            <person name="Kinjyo I."/>
            <person name="Ishibashi T."/>
            <person name="Yoshimura A."/>
            <person name="Yoshida H."/>
        </authorList>
    </citation>
    <scope>FUNCTION</scope>
</reference>
<reference key="15">
    <citation type="journal article" date="2006" name="J. Immunol.">
        <title>IL-27 induces Th1 differentiation via p38 MAPK/T-bet- and intercellular adhesion molecule-1/LFA-1/ERK1/2-dependent pathways.</title>
        <authorList>
            <person name="Owaki T."/>
            <person name="Asakawa M."/>
            <person name="Fukai F."/>
            <person name="Mizuguchi J."/>
            <person name="Yoshimoto T."/>
        </authorList>
    </citation>
    <scope>FUNCTION</scope>
</reference>
<reference key="16">
    <citation type="journal article" date="2006" name="Nat. Immunol.">
        <title>Interleukin 27 limits autoimmune encephalomyelitis by suppressing the development of interleukin 17-producing T cells.</title>
        <authorList>
            <person name="Batten M."/>
            <person name="Li J."/>
            <person name="Yi S."/>
            <person name="Kljavin N.M."/>
            <person name="Danilenko D.M."/>
            <person name="Lucas S."/>
            <person name="Lee J."/>
            <person name="de Sauvage F.J."/>
            <person name="Ghilardi N."/>
        </authorList>
    </citation>
    <scope>MOUSE MODEL OF EXPERIMENTAL AUTOIMMUNE ENCEPHALITIS</scope>
    <scope>FUNCTION</scope>
</reference>
<reference key="17">
    <citation type="journal article" date="2006" name="Nat. Immunol.">
        <title>Interleukin 27 negatively regulates the development of interleukin 17-producing T helper cells during chronic inflammation of the central nervous system.</title>
        <authorList>
            <person name="Stumhofer J.S."/>
            <person name="Laurence A."/>
            <person name="Wilson E.H."/>
            <person name="Huang E."/>
            <person name="Tato C.M."/>
            <person name="Johnson L.M."/>
            <person name="Villarino A.V."/>
            <person name="Huang Q."/>
            <person name="Yoshimura A."/>
            <person name="Sehy D."/>
            <person name="Saris C.J.M."/>
            <person name="O'Shea J.J."/>
            <person name="Hennighausen L."/>
            <person name="Ernst M."/>
            <person name="Hunter C.A."/>
        </authorList>
    </citation>
    <scope>MOUSE MODEL OF EXPERIMENTAL AUTOIMMUNE ENCEPHALITIS</scope>
    <scope>FUNCTION</scope>
    <scope>INDUCTION</scope>
</reference>
<reference key="18">
    <citation type="journal article" date="2007" name="Eur. J. Immunol.">
        <title>IL-27 controls the development of inducible regulatory T cells and Th17 cells via differential effects on STAT1.</title>
        <authorList>
            <person name="Neufert C."/>
            <person name="Becker C."/>
            <person name="Wirtz S."/>
            <person name="Fantini M.C."/>
            <person name="Weigmann B."/>
            <person name="Galle P.R."/>
            <person name="Neurath M.F."/>
        </authorList>
    </citation>
    <scope>FUNCTION</scope>
</reference>
<reference key="19">
    <citation type="journal article" date="2007" name="J. Immunol.">
        <title>IL-27 synthesis induced by TLR ligation critically depends on IFN regulatory factor 3.</title>
        <authorList>
            <person name="Molle C."/>
            <person name="Nguyen M."/>
            <person name="Flamand V."/>
            <person name="Renneson J."/>
            <person name="Trottein F."/>
            <person name="De Wit D."/>
            <person name="Willems F."/>
            <person name="Goldman M."/>
            <person name="Goriely S."/>
        </authorList>
    </citation>
    <scope>INDUCTION</scope>
</reference>
<reference key="20">
    <citation type="journal article" date="2007" name="J. Immunol.">
        <title>Suppressive effect of IL-27 on encephalitogenic Th17 cells and the effector phase of experimental autoimmune encephalomyelitis.</title>
        <authorList>
            <person name="Fitzgerald D.C."/>
            <person name="Ciric B."/>
            <person name="Touil T."/>
            <person name="Harle H."/>
            <person name="Grammatikopolou J."/>
            <person name="Das Sarma J."/>
            <person name="Gran B."/>
            <person name="Zhang G.-X."/>
            <person name="Rostami A."/>
        </authorList>
    </citation>
    <scope>MOUSE MODEL OF EXPERIMENTAL AUTOIMMUNE ENCEPHALITIS</scope>
    <scope>INDUCTION</scope>
</reference>
<reference key="21">
    <citation type="journal article" date="2007" name="J. Mol. Med.">
        <title>The biology and therapeutic potential of interleukin 27.</title>
        <authorList>
            <person name="Batten M."/>
            <person name="Ghilardi N."/>
        </authorList>
    </citation>
    <scope>REVIEW</scope>
</reference>
<reference key="22">
    <citation type="journal article" date="2007" name="J. Neurochem.">
        <title>Peroxisome proliferator-activated receptor-alpha agonist fenofibrate regulates IL-12 family cytokine expression in the CNS: relevance to multiple sclerosis.</title>
        <authorList>
            <person name="Xu J."/>
            <person name="Racke M.K."/>
            <person name="Drew P.D."/>
        </authorList>
    </citation>
    <scope>INDUCTION</scope>
</reference>
<gene>
    <name type="primary">Il27</name>
    <name type="synonym">Il27a</name>
</gene>
<comment type="function">
    <text evidence="4 5 6 7 8 9 11 12 13 14 15 16 17 18 20">Associates with EBI3 to form the IL-27 interleukin, a heterodimeric cytokine which functions in innate immunity. IL-27 has pro- and anti-inflammatory properties, that can regulate T-helper cell development, suppress T-cell proliferation, stimulate cytotoxic T-cell activity, induce isotype switching in B-cells, and that has diverse effects on innate immune cells. Among its target cells are CD4 T-helper cells which can differentiate in type 1 effector cells (TH1), type 2 effector cells (TH2) and IL17 producing helper T-cells (TH17). It drives rapid clonal expansion of naive but not memory CD4 T-cells. It also strongly synergizes with IL-12 to trigger interferon-gamma/IFN-gamma production of naive CD4 T-cells, binds to the cytokine receptor WSX-1/TCCR which appears to be required but not sufficient for IL-27-mediated signal transduction. IL-27 potentiate the early phase of TH1 response and suppress TH2 and TH17 differentiation. It induces the differentiation of TH1 cells via two distinct pathways, p38 MAPK/TBX21- and ICAM1/ITGAL/ERK-dependent pathways. It also induces STAT1, STAT3, STAT4 and STAT5 phosphorylation and activates TBX21/T-Bet via STAT1 with resulting IL12RB2 up-regulation, an event crucial to TH1 cell commitment. It suppresses the expression of GATA3, the inhibitor TH1 cells development. In CD8 T-cells, it activates STATs as well as GZMB. IL-27 reveals to be a potent inhibitor of TH17 cell development and of IL-17 production. Indeed IL27 alone is also able to inhibit the production of IL17 by CD4 and CD8 T-cells. While IL-27 suppressed the development of pro-inflammatory Th17 cells via STAT1, it inhibits the development of anti-inflammatory inducible regulatory T-cells, iTreg, independently of STAT1. IL-27 also has an effect on cytokine production, it suppresses pro-inflammatory cytokine production such as IL2, IL4, IL5 and IL6 and activates suppressors of cytokine signaling such as SOCS1 and SOCS3. Apart from suppression of cytokine production, IL-27 also antagonizes the effects of some cytokines such as IL6 through direct effects on T-cells. Another important role of IL-27 is its antitumor activity as well as its antiangiogenic activity with activation of production of antiangiogenic chemokines such as IP-10/CXCL10 and MIG/CXCL9.</text>
</comment>
<comment type="subunit">
    <text evidence="4">Heterodimer with EBI3; not disulfide-linked. This heterodimer is known as interleukin IL-27.</text>
</comment>
<comment type="subcellular location">
    <subcellularLocation>
        <location evidence="4">Secreted</location>
    </subcellularLocation>
    <text>Poorly secreted without coexpression of EBI3.</text>
</comment>
<comment type="tissue specificity">
    <text evidence="4">Expressed in macrophages and dendritic cells.</text>
</comment>
<comment type="induction">
    <text evidence="10 15 19 21 22">By LPS and Interferon gamma in primary astrocytes and microglia. Induced by Toll-like receptor ligand in dendritic cells. Inhibited by PPAR-alpha agonist such as fenofibrate and produced by TNF-alpha in microglia.</text>
</comment>
<comment type="PTM">
    <text evidence="1">O-glycosylated.</text>
</comment>
<comment type="miscellaneous">
    <text>In mouse models of experimental autoimmune encephalitis (EAE) induced by Toxoplasma Gondi infection, brain levels of IL-27 are massively increased. Deficiency of IL-27 receptors in this mouse model with EAE induces development of a more severe neuroinflammation than in wild-type mice with EAE. This excessive neuroinflammation is associated with increased numbers of TH17 cells in the central nervous system (CNS). Continuous administration of IL-27 to EAE mice produces a strong suppressive effect on active EAE, with reduced CNS infiltration of TH17 cells and TH17 cells activity.</text>
</comment>
<comment type="miscellaneous">
    <text>Mice injected with B16F10 tumor cells develop tumors and lung metastasis. In mice injected with B16F10 tumor cells stably transfected with IL-27, tumor cells grow much more slowly and the number of pulmonary metastasis is markedly reduced. IL-27 exhibits a strong antitumor activity as well as antiangiogenic activity with massive decreased of microvessels density in lung metastasis. Similarly, mice injected with C26 colon tumor cells transfected with IL-27 acquire tumor-specific protective activity and exhibit minimal tumor growth with enhanced IFN-gamma production. This antitumor activity is abolished in TBX21-deficient mice. Neuroblastoma cells overexpressing IL-27 also demonstrate markedly delayed growth; This tumor regression appears to be dependent on CD8 cells.</text>
</comment>
<comment type="similarity">
    <text evidence="23">Belongs to the IL-6 superfamily.</text>
</comment>
<sequence length="234" mass="26542">MGQVTGDLGWRLSLLLLPLLLVQAGSWGFPTDPLSLQELRREFTVSLYLARKLLSEVQGYVHSFAESRLPGVNLDLLPLGYHLPNVSLTFQAWHHLSDSERLCFLATTLRPFPAMLGGLGTQGTWTSSEREQLWAMRLDLRDLHRHLRFQVLAAGFKCSKEEEDKEEEEEEEEEEKKLPLGALGGPNQVSSQVSWPQLLYTYQLLHSLELVLSRAVRDLLLLSLPRRPGSAWDS</sequence>
<evidence type="ECO:0000250" key="1"/>
<evidence type="ECO:0000255" key="2"/>
<evidence type="ECO:0000256" key="3">
    <source>
        <dbReference type="SAM" id="MobiDB-lite"/>
    </source>
</evidence>
<evidence type="ECO:0000269" key="4">
    <source>
    </source>
</evidence>
<evidence type="ECO:0000269" key="5">
    <source>
    </source>
</evidence>
<evidence type="ECO:0000269" key="6">
    <source>
    </source>
</evidence>
<evidence type="ECO:0000269" key="7">
    <source>
    </source>
</evidence>
<evidence type="ECO:0000269" key="8">
    <source>
    </source>
</evidence>
<evidence type="ECO:0000269" key="9">
    <source>
    </source>
</evidence>
<evidence type="ECO:0000269" key="10">
    <source>
    </source>
</evidence>
<evidence type="ECO:0000269" key="11">
    <source>
    </source>
</evidence>
<evidence type="ECO:0000269" key="12">
    <source>
    </source>
</evidence>
<evidence type="ECO:0000269" key="13">
    <source>
    </source>
</evidence>
<evidence type="ECO:0000269" key="14">
    <source>
    </source>
</evidence>
<evidence type="ECO:0000269" key="15">
    <source>
    </source>
</evidence>
<evidence type="ECO:0000269" key="16">
    <source>
    </source>
</evidence>
<evidence type="ECO:0000269" key="17">
    <source>
    </source>
</evidence>
<evidence type="ECO:0000269" key="18">
    <source>
    </source>
</evidence>
<evidence type="ECO:0000269" key="19">
    <source>
    </source>
</evidence>
<evidence type="ECO:0000269" key="20">
    <source>
    </source>
</evidence>
<evidence type="ECO:0000269" key="21">
    <source>
    </source>
</evidence>
<evidence type="ECO:0000269" key="22">
    <source>
    </source>
</evidence>
<evidence type="ECO:0000305" key="23"/>
<evidence type="ECO:0007829" key="24">
    <source>
        <dbReference type="PDB" id="7ZG0"/>
    </source>
</evidence>
<proteinExistence type="evidence at protein level"/>
<name>IL27A_MOUSE</name>
<keyword id="KW-0002">3D-structure</keyword>
<keyword id="KW-0202">Cytokine</keyword>
<keyword id="KW-0325">Glycoprotein</keyword>
<keyword id="KW-0391">Immunity</keyword>
<keyword id="KW-0395">Inflammatory response</keyword>
<keyword id="KW-0399">Innate immunity</keyword>
<keyword id="KW-1185">Reference proteome</keyword>
<keyword id="KW-0964">Secreted</keyword>
<keyword id="KW-0732">Signal</keyword>
<dbReference type="EMBL" id="AY099297">
    <property type="protein sequence ID" value="AAM34499.1"/>
    <property type="molecule type" value="mRNA"/>
</dbReference>
<dbReference type="EMBL" id="AK152114">
    <property type="protein sequence ID" value="BAE30958.1"/>
    <property type="molecule type" value="mRNA"/>
</dbReference>
<dbReference type="EMBL" id="AK153466">
    <property type="protein sequence ID" value="BAE32017.1"/>
    <property type="molecule type" value="mRNA"/>
</dbReference>
<dbReference type="EMBL" id="BC119402">
    <property type="protein sequence ID" value="AAI19403.1"/>
    <property type="molecule type" value="mRNA"/>
</dbReference>
<dbReference type="CCDS" id="CCDS21835.1"/>
<dbReference type="RefSeq" id="NP_663611.1">
    <property type="nucleotide sequence ID" value="NM_145636.2"/>
</dbReference>
<dbReference type="PDB" id="7Z0L">
    <property type="method" value="EM"/>
    <property type="resolution" value="4.00 A"/>
    <property type="chains" value="B=28-234"/>
</dbReference>
<dbReference type="PDB" id="7ZG0">
    <property type="method" value="X-ray"/>
    <property type="resolution" value="3.18 A"/>
    <property type="chains" value="A/B=28-234"/>
</dbReference>
<dbReference type="PDBsum" id="7Z0L"/>
<dbReference type="PDBsum" id="7ZG0"/>
<dbReference type="EMDB" id="EMD-14427"/>
<dbReference type="SMR" id="Q8K3I6"/>
<dbReference type="FunCoup" id="Q8K3I6">
    <property type="interactions" value="385"/>
</dbReference>
<dbReference type="IntAct" id="Q8K3I6">
    <property type="interactions" value="2"/>
</dbReference>
<dbReference type="STRING" id="10090.ENSMUSP00000054637"/>
<dbReference type="GlyCosmos" id="Q8K3I6">
    <property type="glycosylation" value="1 site, No reported glycans"/>
</dbReference>
<dbReference type="GlyGen" id="Q8K3I6">
    <property type="glycosylation" value="1 site"/>
</dbReference>
<dbReference type="PhosphoSitePlus" id="Q8K3I6"/>
<dbReference type="jPOST" id="Q8K3I6"/>
<dbReference type="PaxDb" id="10090-ENSMUSP00000054637"/>
<dbReference type="Antibodypedia" id="13022">
    <property type="antibodies" value="607 antibodies from 40 providers"/>
</dbReference>
<dbReference type="DNASU" id="246779"/>
<dbReference type="Ensembl" id="ENSMUST00000058429.6">
    <property type="protein sequence ID" value="ENSMUSP00000054637.6"/>
    <property type="gene ID" value="ENSMUSG00000044701.6"/>
</dbReference>
<dbReference type="GeneID" id="246779"/>
<dbReference type="KEGG" id="mmu:246779"/>
<dbReference type="UCSC" id="uc009jsc.1">
    <property type="organism name" value="mouse"/>
</dbReference>
<dbReference type="AGR" id="MGI:2384409"/>
<dbReference type="CTD" id="246778"/>
<dbReference type="MGI" id="MGI:2384409">
    <property type="gene designation" value="Il27"/>
</dbReference>
<dbReference type="VEuPathDB" id="HostDB:ENSMUSG00000044701"/>
<dbReference type="eggNOG" id="ENOG502SVMM">
    <property type="taxonomic scope" value="Eukaryota"/>
</dbReference>
<dbReference type="GeneTree" id="ENSGT00390000018206"/>
<dbReference type="HOGENOM" id="CLU_102031_0_0_1"/>
<dbReference type="InParanoid" id="Q8K3I6"/>
<dbReference type="OMA" id="LCFLSMM"/>
<dbReference type="OrthoDB" id="9446539at2759"/>
<dbReference type="PhylomeDB" id="Q8K3I6"/>
<dbReference type="TreeFam" id="TF337498"/>
<dbReference type="Reactome" id="R-MMU-9020956">
    <property type="pathway name" value="Interleukin-27 signaling"/>
</dbReference>
<dbReference type="BioGRID-ORCS" id="246779">
    <property type="hits" value="2 hits in 77 CRISPR screens"/>
</dbReference>
<dbReference type="ChiTaRS" id="Il27">
    <property type="organism name" value="mouse"/>
</dbReference>
<dbReference type="PRO" id="PR:Q8K3I6"/>
<dbReference type="Proteomes" id="UP000000589">
    <property type="component" value="Chromosome 7"/>
</dbReference>
<dbReference type="RNAct" id="Q8K3I6">
    <property type="molecule type" value="protein"/>
</dbReference>
<dbReference type="Bgee" id="ENSMUSG00000044701">
    <property type="expression patterns" value="Expressed in granulocyte and 13 other cell types or tissues"/>
</dbReference>
<dbReference type="GO" id="GO:0009986">
    <property type="term" value="C:cell surface"/>
    <property type="evidence" value="ECO:0007669"/>
    <property type="project" value="Ensembl"/>
</dbReference>
<dbReference type="GO" id="GO:0005829">
    <property type="term" value="C:cytosol"/>
    <property type="evidence" value="ECO:0000304"/>
    <property type="project" value="Reactome"/>
</dbReference>
<dbReference type="GO" id="GO:0005576">
    <property type="term" value="C:extracellular region"/>
    <property type="evidence" value="ECO:0000304"/>
    <property type="project" value="Reactome"/>
</dbReference>
<dbReference type="GO" id="GO:0005615">
    <property type="term" value="C:extracellular space"/>
    <property type="evidence" value="ECO:0000314"/>
    <property type="project" value="MGI"/>
</dbReference>
<dbReference type="GO" id="GO:0005125">
    <property type="term" value="F:cytokine activity"/>
    <property type="evidence" value="ECO:0007669"/>
    <property type="project" value="UniProtKB-KW"/>
</dbReference>
<dbReference type="GO" id="GO:0045523">
    <property type="term" value="F:interleukin-27 receptor binding"/>
    <property type="evidence" value="ECO:0000314"/>
    <property type="project" value="MGI"/>
</dbReference>
<dbReference type="GO" id="GO:0005102">
    <property type="term" value="F:signaling receptor binding"/>
    <property type="evidence" value="ECO:0000314"/>
    <property type="project" value="MGI"/>
</dbReference>
<dbReference type="GO" id="GO:0006954">
    <property type="term" value="P:inflammatory response"/>
    <property type="evidence" value="ECO:0007669"/>
    <property type="project" value="UniProtKB-KW"/>
</dbReference>
<dbReference type="GO" id="GO:0045087">
    <property type="term" value="P:innate immune response"/>
    <property type="evidence" value="ECO:0007669"/>
    <property type="project" value="UniProtKB-KW"/>
</dbReference>
<dbReference type="GO" id="GO:0002230">
    <property type="term" value="P:positive regulation of defense response to virus by host"/>
    <property type="evidence" value="ECO:0000314"/>
    <property type="project" value="MGI"/>
</dbReference>
<dbReference type="GO" id="GO:0032729">
    <property type="term" value="P:positive regulation of type II interferon production"/>
    <property type="evidence" value="ECO:0007669"/>
    <property type="project" value="Ensembl"/>
</dbReference>
<dbReference type="GO" id="GO:0042129">
    <property type="term" value="P:regulation of T cell proliferation"/>
    <property type="evidence" value="ECO:0000314"/>
    <property type="project" value="MGI"/>
</dbReference>
<dbReference type="GO" id="GO:0045625">
    <property type="term" value="P:regulation of T-helper 1 cell differentiation"/>
    <property type="evidence" value="ECO:0007669"/>
    <property type="project" value="Ensembl"/>
</dbReference>
<dbReference type="GO" id="GO:0140459">
    <property type="term" value="P:response to Gram-positive bacterium"/>
    <property type="evidence" value="ECO:0007669"/>
    <property type="project" value="Ensembl"/>
</dbReference>
<dbReference type="FunFam" id="1.20.1250.10:FF:000035">
    <property type="entry name" value="Interleukin-27 subunit alpha"/>
    <property type="match status" value="1"/>
</dbReference>
<dbReference type="Gene3D" id="1.20.1250.10">
    <property type="match status" value="1"/>
</dbReference>
<dbReference type="InterPro" id="IPR009079">
    <property type="entry name" value="4_helix_cytokine-like_core"/>
</dbReference>
<dbReference type="InterPro" id="IPR026207">
    <property type="entry name" value="IL-27_alpha"/>
</dbReference>
<dbReference type="PANTHER" id="PTHR20879">
    <property type="entry name" value="INTERLEUKIN-27 SUBUNIT ALPHA"/>
    <property type="match status" value="1"/>
</dbReference>
<dbReference type="PANTHER" id="PTHR20879:SF1">
    <property type="entry name" value="INTERLEUKIN-27 SUBUNIT ALPHA"/>
    <property type="match status" value="1"/>
</dbReference>
<accession>Q8K3I6</accession>
<organism>
    <name type="scientific">Mus musculus</name>
    <name type="common">Mouse</name>
    <dbReference type="NCBI Taxonomy" id="10090"/>
    <lineage>
        <taxon>Eukaryota</taxon>
        <taxon>Metazoa</taxon>
        <taxon>Chordata</taxon>
        <taxon>Craniata</taxon>
        <taxon>Vertebrata</taxon>
        <taxon>Euteleostomi</taxon>
        <taxon>Mammalia</taxon>
        <taxon>Eutheria</taxon>
        <taxon>Euarchontoglires</taxon>
        <taxon>Glires</taxon>
        <taxon>Rodentia</taxon>
        <taxon>Myomorpha</taxon>
        <taxon>Muroidea</taxon>
        <taxon>Muridae</taxon>
        <taxon>Murinae</taxon>
        <taxon>Mus</taxon>
        <taxon>Mus</taxon>
    </lineage>
</organism>
<feature type="signal peptide" evidence="2">
    <location>
        <begin position="1"/>
        <end position="28"/>
    </location>
</feature>
<feature type="chain" id="PRO_0000320140" description="Interleukin-27 subunit alpha">
    <location>
        <begin position="29"/>
        <end position="234"/>
    </location>
</feature>
<feature type="region of interest" description="Disordered" evidence="3">
    <location>
        <begin position="160"/>
        <end position="185"/>
    </location>
</feature>
<feature type="compositionally biased region" description="Acidic residues" evidence="3">
    <location>
        <begin position="161"/>
        <end position="174"/>
    </location>
</feature>
<feature type="glycosylation site" description="N-linked (GlcNAc...) asparagine" evidence="2">
    <location>
        <position position="85"/>
    </location>
</feature>
<feature type="helix" evidence="24">
    <location>
        <begin position="36"/>
        <end position="68"/>
    </location>
</feature>
<feature type="helix" evidence="24">
    <location>
        <begin position="74"/>
        <end position="76"/>
    </location>
</feature>
<feature type="helix" evidence="24">
    <location>
        <begin position="90"/>
        <end position="95"/>
    </location>
</feature>
<feature type="helix" evidence="24">
    <location>
        <begin position="98"/>
        <end position="109"/>
    </location>
</feature>
<feature type="helix" evidence="24">
    <location>
        <begin position="112"/>
        <end position="119"/>
    </location>
</feature>
<feature type="helix" evidence="24">
    <location>
        <begin position="120"/>
        <end position="122"/>
    </location>
</feature>
<feature type="helix" evidence="24">
    <location>
        <begin position="127"/>
        <end position="154"/>
    </location>
</feature>
<feature type="helix" evidence="24">
    <location>
        <begin position="195"/>
        <end position="222"/>
    </location>
</feature>